<comment type="function">
    <text evidence="1">Specifically dimethylates two adjacent adenosines (A1518 and A1519) in the loop of a conserved hairpin near the 3'-end of 16S rRNA in the 30S particle. May play a critical role in biogenesis of 30S subunits.</text>
</comment>
<comment type="catalytic activity">
    <reaction evidence="1">
        <text>adenosine(1518)/adenosine(1519) in 16S rRNA + 4 S-adenosyl-L-methionine = N(6)-dimethyladenosine(1518)/N(6)-dimethyladenosine(1519) in 16S rRNA + 4 S-adenosyl-L-homocysteine + 4 H(+)</text>
        <dbReference type="Rhea" id="RHEA:19609"/>
        <dbReference type="Rhea" id="RHEA-COMP:10232"/>
        <dbReference type="Rhea" id="RHEA-COMP:10233"/>
        <dbReference type="ChEBI" id="CHEBI:15378"/>
        <dbReference type="ChEBI" id="CHEBI:57856"/>
        <dbReference type="ChEBI" id="CHEBI:59789"/>
        <dbReference type="ChEBI" id="CHEBI:74411"/>
        <dbReference type="ChEBI" id="CHEBI:74493"/>
        <dbReference type="EC" id="2.1.1.182"/>
    </reaction>
</comment>
<comment type="subcellular location">
    <subcellularLocation>
        <location evidence="1">Cytoplasm</location>
    </subcellularLocation>
</comment>
<comment type="similarity">
    <text evidence="1">Belongs to the class I-like SAM-binding methyltransferase superfamily. rRNA adenine N(6)-methyltransferase family. RsmA subfamily.</text>
</comment>
<gene>
    <name evidence="1" type="primary">rsmA</name>
    <name evidence="1" type="synonym">ksgA</name>
    <name type="ordered locus">Sbal223_3313</name>
</gene>
<sequence length="268" mass="30122">MSNKVHLGHTARKRFGQNFLTDGNVIDRIVGAISPDNHHVMVEIGPGLGALTEPVAEAVDNLTVVELDRDLVERLHHHPVLKDKLTIHQGDALQFDFGQLSVPGKKMKVFGNLPYNISTPLMFHLFEFAEQIETMHFMLQKEVVLRLSASPGCKAYGRLTVMAQYFCQVVPVLEVPPHSFTPAPKVDSAVVRLLPYAVKPFPCKDVTVLRHLCTTAFNMRRKTLRNNLKHMLSDDEFEQLGIDSSQRPEQISVQQYVAMANMVCDKKA</sequence>
<evidence type="ECO:0000255" key="1">
    <source>
        <dbReference type="HAMAP-Rule" id="MF_00607"/>
    </source>
</evidence>
<keyword id="KW-0963">Cytoplasm</keyword>
<keyword id="KW-0489">Methyltransferase</keyword>
<keyword id="KW-0694">RNA-binding</keyword>
<keyword id="KW-0698">rRNA processing</keyword>
<keyword id="KW-0949">S-adenosyl-L-methionine</keyword>
<keyword id="KW-0808">Transferase</keyword>
<feature type="chain" id="PRO_1000194398" description="Ribosomal RNA small subunit methyltransferase A">
    <location>
        <begin position="1"/>
        <end position="268"/>
    </location>
</feature>
<feature type="binding site" evidence="1">
    <location>
        <position position="18"/>
    </location>
    <ligand>
        <name>S-adenosyl-L-methionine</name>
        <dbReference type="ChEBI" id="CHEBI:59789"/>
    </ligand>
</feature>
<feature type="binding site" evidence="1">
    <location>
        <position position="20"/>
    </location>
    <ligand>
        <name>S-adenosyl-L-methionine</name>
        <dbReference type="ChEBI" id="CHEBI:59789"/>
    </ligand>
</feature>
<feature type="binding site" evidence="1">
    <location>
        <position position="45"/>
    </location>
    <ligand>
        <name>S-adenosyl-L-methionine</name>
        <dbReference type="ChEBI" id="CHEBI:59789"/>
    </ligand>
</feature>
<feature type="binding site" evidence="1">
    <location>
        <position position="66"/>
    </location>
    <ligand>
        <name>S-adenosyl-L-methionine</name>
        <dbReference type="ChEBI" id="CHEBI:59789"/>
    </ligand>
</feature>
<feature type="binding site" evidence="1">
    <location>
        <position position="91"/>
    </location>
    <ligand>
        <name>S-adenosyl-L-methionine</name>
        <dbReference type="ChEBI" id="CHEBI:59789"/>
    </ligand>
</feature>
<feature type="binding site" evidence="1">
    <location>
        <position position="112"/>
    </location>
    <ligand>
        <name>S-adenosyl-L-methionine</name>
        <dbReference type="ChEBI" id="CHEBI:59789"/>
    </ligand>
</feature>
<reference key="1">
    <citation type="submission" date="2008-12" db="EMBL/GenBank/DDBJ databases">
        <title>Complete sequence of chromosome of Shewanella baltica OS223.</title>
        <authorList>
            <consortium name="US DOE Joint Genome Institute"/>
            <person name="Lucas S."/>
            <person name="Copeland A."/>
            <person name="Lapidus A."/>
            <person name="Glavina del Rio T."/>
            <person name="Dalin E."/>
            <person name="Tice H."/>
            <person name="Bruce D."/>
            <person name="Goodwin L."/>
            <person name="Pitluck S."/>
            <person name="Chertkov O."/>
            <person name="Meincke L."/>
            <person name="Brettin T."/>
            <person name="Detter J.C."/>
            <person name="Han C."/>
            <person name="Kuske C.R."/>
            <person name="Larimer F."/>
            <person name="Land M."/>
            <person name="Hauser L."/>
            <person name="Kyrpides N."/>
            <person name="Ovchinnikova G."/>
            <person name="Brettar I."/>
            <person name="Rodrigues J."/>
            <person name="Konstantinidis K."/>
            <person name="Tiedje J."/>
        </authorList>
    </citation>
    <scope>NUCLEOTIDE SEQUENCE [LARGE SCALE GENOMIC DNA]</scope>
    <source>
        <strain>OS223</strain>
    </source>
</reference>
<protein>
    <recommendedName>
        <fullName evidence="1">Ribosomal RNA small subunit methyltransferase A</fullName>
        <ecNumber evidence="1">2.1.1.182</ecNumber>
    </recommendedName>
    <alternativeName>
        <fullName evidence="1">16S rRNA (adenine(1518)-N(6)/adenine(1519)-N(6))-dimethyltransferase</fullName>
    </alternativeName>
    <alternativeName>
        <fullName evidence="1">16S rRNA dimethyladenosine transferase</fullName>
    </alternativeName>
    <alternativeName>
        <fullName evidence="1">16S rRNA dimethylase</fullName>
    </alternativeName>
    <alternativeName>
        <fullName evidence="1">S-adenosylmethionine-6-N', N'-adenosyl(rRNA) dimethyltransferase</fullName>
    </alternativeName>
</protein>
<proteinExistence type="inferred from homology"/>
<organism>
    <name type="scientific">Shewanella baltica (strain OS223)</name>
    <dbReference type="NCBI Taxonomy" id="407976"/>
    <lineage>
        <taxon>Bacteria</taxon>
        <taxon>Pseudomonadati</taxon>
        <taxon>Pseudomonadota</taxon>
        <taxon>Gammaproteobacteria</taxon>
        <taxon>Alteromonadales</taxon>
        <taxon>Shewanellaceae</taxon>
        <taxon>Shewanella</taxon>
    </lineage>
</organism>
<dbReference type="EC" id="2.1.1.182" evidence="1"/>
<dbReference type="EMBL" id="CP001252">
    <property type="protein sequence ID" value="ACK47797.1"/>
    <property type="molecule type" value="Genomic_DNA"/>
</dbReference>
<dbReference type="RefSeq" id="WP_011846027.1">
    <property type="nucleotide sequence ID" value="NC_011663.1"/>
</dbReference>
<dbReference type="SMR" id="B8EB35"/>
<dbReference type="KEGG" id="sbp:Sbal223_3313"/>
<dbReference type="HOGENOM" id="CLU_041220_0_1_6"/>
<dbReference type="Proteomes" id="UP000002507">
    <property type="component" value="Chromosome"/>
</dbReference>
<dbReference type="GO" id="GO:0005829">
    <property type="term" value="C:cytosol"/>
    <property type="evidence" value="ECO:0007669"/>
    <property type="project" value="TreeGrafter"/>
</dbReference>
<dbReference type="GO" id="GO:0052908">
    <property type="term" value="F:16S rRNA (adenine(1518)-N(6)/adenine(1519)-N(6))-dimethyltransferase activity"/>
    <property type="evidence" value="ECO:0007669"/>
    <property type="project" value="UniProtKB-EC"/>
</dbReference>
<dbReference type="GO" id="GO:0003723">
    <property type="term" value="F:RNA binding"/>
    <property type="evidence" value="ECO:0007669"/>
    <property type="project" value="UniProtKB-KW"/>
</dbReference>
<dbReference type="CDD" id="cd02440">
    <property type="entry name" value="AdoMet_MTases"/>
    <property type="match status" value="1"/>
</dbReference>
<dbReference type="FunFam" id="1.10.8.100:FF:000001">
    <property type="entry name" value="Ribosomal RNA small subunit methyltransferase A"/>
    <property type="match status" value="1"/>
</dbReference>
<dbReference type="FunFam" id="3.40.50.150:FF:000006">
    <property type="entry name" value="Ribosomal RNA small subunit methyltransferase A"/>
    <property type="match status" value="1"/>
</dbReference>
<dbReference type="Gene3D" id="1.10.8.100">
    <property type="entry name" value="Ribosomal RNA adenine dimethylase-like, domain 2"/>
    <property type="match status" value="1"/>
</dbReference>
<dbReference type="Gene3D" id="3.40.50.150">
    <property type="entry name" value="Vaccinia Virus protein VP39"/>
    <property type="match status" value="1"/>
</dbReference>
<dbReference type="HAMAP" id="MF_00607">
    <property type="entry name" value="16SrRNA_methyltr_A"/>
    <property type="match status" value="1"/>
</dbReference>
<dbReference type="InterPro" id="IPR001737">
    <property type="entry name" value="KsgA/Erm"/>
</dbReference>
<dbReference type="InterPro" id="IPR023165">
    <property type="entry name" value="rRNA_Ade_diMease-like_C"/>
</dbReference>
<dbReference type="InterPro" id="IPR020596">
    <property type="entry name" value="rRNA_Ade_Mease_Trfase_CS"/>
</dbReference>
<dbReference type="InterPro" id="IPR020598">
    <property type="entry name" value="rRNA_Ade_methylase_Trfase_N"/>
</dbReference>
<dbReference type="InterPro" id="IPR011530">
    <property type="entry name" value="rRNA_adenine_dimethylase"/>
</dbReference>
<dbReference type="InterPro" id="IPR029063">
    <property type="entry name" value="SAM-dependent_MTases_sf"/>
</dbReference>
<dbReference type="NCBIfam" id="TIGR00755">
    <property type="entry name" value="ksgA"/>
    <property type="match status" value="1"/>
</dbReference>
<dbReference type="PANTHER" id="PTHR11727">
    <property type="entry name" value="DIMETHYLADENOSINE TRANSFERASE"/>
    <property type="match status" value="1"/>
</dbReference>
<dbReference type="PANTHER" id="PTHR11727:SF7">
    <property type="entry name" value="DIMETHYLADENOSINE TRANSFERASE-RELATED"/>
    <property type="match status" value="1"/>
</dbReference>
<dbReference type="Pfam" id="PF00398">
    <property type="entry name" value="RrnaAD"/>
    <property type="match status" value="1"/>
</dbReference>
<dbReference type="SMART" id="SM00650">
    <property type="entry name" value="rADc"/>
    <property type="match status" value="1"/>
</dbReference>
<dbReference type="SUPFAM" id="SSF53335">
    <property type="entry name" value="S-adenosyl-L-methionine-dependent methyltransferases"/>
    <property type="match status" value="1"/>
</dbReference>
<dbReference type="PROSITE" id="PS01131">
    <property type="entry name" value="RRNA_A_DIMETH"/>
    <property type="match status" value="1"/>
</dbReference>
<dbReference type="PROSITE" id="PS51689">
    <property type="entry name" value="SAM_RNA_A_N6_MT"/>
    <property type="match status" value="1"/>
</dbReference>
<accession>B8EB35</accession>
<name>RSMA_SHEB2</name>